<accession>A6TZR0</accession>
<dbReference type="EMBL" id="CP000736">
    <property type="protein sequence ID" value="ABR51678.1"/>
    <property type="molecule type" value="Genomic_DNA"/>
</dbReference>
<dbReference type="SMR" id="A6TZR0"/>
<dbReference type="KEGG" id="sah:SaurJH1_0822"/>
<dbReference type="HOGENOM" id="CLU_108953_0_0_9"/>
<dbReference type="GO" id="GO:0005829">
    <property type="term" value="C:cytosol"/>
    <property type="evidence" value="ECO:0007669"/>
    <property type="project" value="TreeGrafter"/>
</dbReference>
<dbReference type="GO" id="GO:0003723">
    <property type="term" value="F:RNA binding"/>
    <property type="evidence" value="ECO:0007669"/>
    <property type="project" value="UniProtKB-UniRule"/>
</dbReference>
<dbReference type="GO" id="GO:0070929">
    <property type="term" value="P:trans-translation"/>
    <property type="evidence" value="ECO:0007669"/>
    <property type="project" value="UniProtKB-UniRule"/>
</dbReference>
<dbReference type="CDD" id="cd09294">
    <property type="entry name" value="SmpB"/>
    <property type="match status" value="1"/>
</dbReference>
<dbReference type="Gene3D" id="2.40.280.10">
    <property type="match status" value="1"/>
</dbReference>
<dbReference type="HAMAP" id="MF_00023">
    <property type="entry name" value="SmpB"/>
    <property type="match status" value="1"/>
</dbReference>
<dbReference type="InterPro" id="IPR023620">
    <property type="entry name" value="SmpB"/>
</dbReference>
<dbReference type="InterPro" id="IPR000037">
    <property type="entry name" value="SsrA-bd_prot"/>
</dbReference>
<dbReference type="InterPro" id="IPR020081">
    <property type="entry name" value="SsrA-bd_prot_CS"/>
</dbReference>
<dbReference type="NCBIfam" id="NF003843">
    <property type="entry name" value="PRK05422.1"/>
    <property type="match status" value="1"/>
</dbReference>
<dbReference type="NCBIfam" id="TIGR00086">
    <property type="entry name" value="smpB"/>
    <property type="match status" value="1"/>
</dbReference>
<dbReference type="PANTHER" id="PTHR30308:SF2">
    <property type="entry name" value="SSRA-BINDING PROTEIN"/>
    <property type="match status" value="1"/>
</dbReference>
<dbReference type="PANTHER" id="PTHR30308">
    <property type="entry name" value="TMRNA-BINDING COMPONENT OF TRANS-TRANSLATION TAGGING COMPLEX"/>
    <property type="match status" value="1"/>
</dbReference>
<dbReference type="Pfam" id="PF01668">
    <property type="entry name" value="SmpB"/>
    <property type="match status" value="1"/>
</dbReference>
<dbReference type="SUPFAM" id="SSF74982">
    <property type="entry name" value="Small protein B (SmpB)"/>
    <property type="match status" value="1"/>
</dbReference>
<dbReference type="PROSITE" id="PS01317">
    <property type="entry name" value="SSRP"/>
    <property type="match status" value="1"/>
</dbReference>
<name>SSRP_STAA2</name>
<keyword id="KW-0963">Cytoplasm</keyword>
<keyword id="KW-0694">RNA-binding</keyword>
<proteinExistence type="inferred from homology"/>
<organism>
    <name type="scientific">Staphylococcus aureus (strain JH1)</name>
    <dbReference type="NCBI Taxonomy" id="359787"/>
    <lineage>
        <taxon>Bacteria</taxon>
        <taxon>Bacillati</taxon>
        <taxon>Bacillota</taxon>
        <taxon>Bacilli</taxon>
        <taxon>Bacillales</taxon>
        <taxon>Staphylococcaceae</taxon>
        <taxon>Staphylococcus</taxon>
    </lineage>
</organism>
<sequence>MAKKKSPGTLAENRKARHDYNIEDTIEAGIVLQGTEIKSIRRGSANLKDSYAQVKNGEMYLNNMHIAPYEEGNRFNHDPLRSRKLLLHKREIFKLGEQTREIGYSIVPLKLYLKHGHCKVLLGVARGKKKYDKRQALKEKAVKRDVARDMKARY</sequence>
<reference key="1">
    <citation type="submission" date="2007-06" db="EMBL/GenBank/DDBJ databases">
        <title>Complete sequence of chromosome of Staphylococcus aureus subsp. aureus JH1.</title>
        <authorList>
            <consortium name="US DOE Joint Genome Institute"/>
            <person name="Copeland A."/>
            <person name="Lucas S."/>
            <person name="Lapidus A."/>
            <person name="Barry K."/>
            <person name="Detter J.C."/>
            <person name="Glavina del Rio T."/>
            <person name="Hammon N."/>
            <person name="Israni S."/>
            <person name="Dalin E."/>
            <person name="Tice H."/>
            <person name="Pitluck S."/>
            <person name="Chain P."/>
            <person name="Malfatti S."/>
            <person name="Shin M."/>
            <person name="Vergez L."/>
            <person name="Schmutz J."/>
            <person name="Larimer F."/>
            <person name="Land M."/>
            <person name="Hauser L."/>
            <person name="Kyrpides N."/>
            <person name="Ivanova N."/>
            <person name="Tomasz A."/>
            <person name="Richardson P."/>
        </authorList>
    </citation>
    <scope>NUCLEOTIDE SEQUENCE [LARGE SCALE GENOMIC DNA]</scope>
    <source>
        <strain>JH1</strain>
    </source>
</reference>
<evidence type="ECO:0000255" key="1">
    <source>
        <dbReference type="HAMAP-Rule" id="MF_00023"/>
    </source>
</evidence>
<gene>
    <name evidence="1" type="primary">smpB</name>
    <name type="ordered locus">SaurJH1_0822</name>
</gene>
<protein>
    <recommendedName>
        <fullName evidence="1">SsrA-binding protein</fullName>
    </recommendedName>
    <alternativeName>
        <fullName evidence="1">Small protein B</fullName>
    </alternativeName>
</protein>
<comment type="function">
    <text evidence="1">Required for rescue of stalled ribosomes mediated by trans-translation. Binds to transfer-messenger RNA (tmRNA), required for stable association of tmRNA with ribosomes. tmRNA and SmpB together mimic tRNA shape, replacing the anticodon stem-loop with SmpB. tmRNA is encoded by the ssrA gene; the 2 termini fold to resemble tRNA(Ala) and it encodes a 'tag peptide', a short internal open reading frame. During trans-translation Ala-aminoacylated tmRNA acts like a tRNA, entering the A-site of stalled ribosomes, displacing the stalled mRNA. The ribosome then switches to translate the ORF on the tmRNA; the nascent peptide is terminated with the 'tag peptide' encoded by the tmRNA and targeted for degradation. The ribosome is freed to recommence translation, which seems to be the essential function of trans-translation.</text>
</comment>
<comment type="subcellular location">
    <subcellularLocation>
        <location evidence="1">Cytoplasm</location>
    </subcellularLocation>
    <text evidence="1">The tmRNA-SmpB complex associates with stalled 70S ribosomes.</text>
</comment>
<comment type="similarity">
    <text evidence="1">Belongs to the SmpB family.</text>
</comment>
<feature type="chain" id="PRO_1000074373" description="SsrA-binding protein">
    <location>
        <begin position="1"/>
        <end position="154"/>
    </location>
</feature>